<sequence>MTRKQTPMTLALCALGLFAASAASALAADAPMAPPKSEINAAVGTGAKFTPPPESAIPDDDFGKMVKLGRDIMLDTPKYAKDYVGNTLSCVNCHTDAGRMAGSAPLWAAYVSYPAYRGKNKKVNTFEERLQGCFKFSQNGKAPPLGSKTLVALESYSYWLSKGLPVDEKVAGRGYPNLPEPQQAPDYVRGQKVYEAKCILCHAANGEGQYVNGETVFPPLWGPKSFNWGAGMGSYKNAAKFIYANMPYGMSYSLSPQEAWDVAYFMDAQERPQDPRWQGSVAATRAKFHDSKFSLYGTKVNGKLLGDIGAPKPR</sequence>
<gene>
    <name type="primary">tsdA</name>
    <name type="ordered locus">Tint_2892</name>
</gene>
<dbReference type="EC" id="1.8.2.2"/>
<dbReference type="EMBL" id="CP002021">
    <property type="protein sequence ID" value="ADG32232.1"/>
    <property type="molecule type" value="Genomic_DNA"/>
</dbReference>
<dbReference type="SMR" id="D5WYQ5"/>
<dbReference type="STRING" id="75379.Tint_2892"/>
<dbReference type="KEGG" id="tin:Tint_2892"/>
<dbReference type="eggNOG" id="COG3258">
    <property type="taxonomic scope" value="Bacteria"/>
</dbReference>
<dbReference type="HOGENOM" id="CLU_058582_1_0_4"/>
<dbReference type="BioCyc" id="TINT75379:TINT_RS14495-MONOMER"/>
<dbReference type="GO" id="GO:0042597">
    <property type="term" value="C:periplasmic space"/>
    <property type="evidence" value="ECO:0007669"/>
    <property type="project" value="UniProtKB-SubCell"/>
</dbReference>
<dbReference type="GO" id="GO:0009055">
    <property type="term" value="F:electron transfer activity"/>
    <property type="evidence" value="ECO:0007669"/>
    <property type="project" value="InterPro"/>
</dbReference>
<dbReference type="GO" id="GO:0020037">
    <property type="term" value="F:heme binding"/>
    <property type="evidence" value="ECO:0007669"/>
    <property type="project" value="InterPro"/>
</dbReference>
<dbReference type="GO" id="GO:0046872">
    <property type="term" value="F:metal ion binding"/>
    <property type="evidence" value="ECO:0007669"/>
    <property type="project" value="UniProtKB-KW"/>
</dbReference>
<dbReference type="GO" id="GO:0050338">
    <property type="term" value="F:thiosulfate dehydrogenase activity"/>
    <property type="evidence" value="ECO:0000314"/>
    <property type="project" value="UniProtKB"/>
</dbReference>
<dbReference type="FunFam" id="1.10.760.10:FF:000036">
    <property type="entry name" value="Thiosulfate dehydrogenase"/>
    <property type="match status" value="1"/>
</dbReference>
<dbReference type="FunFam" id="1.10.760.10:FF:000039">
    <property type="entry name" value="Thiosulfate dehydrogenase"/>
    <property type="match status" value="1"/>
</dbReference>
<dbReference type="Gene3D" id="1.10.760.10">
    <property type="entry name" value="Cytochrome c-like domain"/>
    <property type="match status" value="2"/>
</dbReference>
<dbReference type="InterPro" id="IPR009056">
    <property type="entry name" value="Cyt_c-like_dom"/>
</dbReference>
<dbReference type="InterPro" id="IPR036909">
    <property type="entry name" value="Cyt_c-like_dom_sf"/>
</dbReference>
<dbReference type="InterPro" id="IPR051459">
    <property type="entry name" value="Cytochrome_c-type_DH"/>
</dbReference>
<dbReference type="PANTHER" id="PTHR35008">
    <property type="entry name" value="BLL4482 PROTEIN-RELATED"/>
    <property type="match status" value="1"/>
</dbReference>
<dbReference type="PANTHER" id="PTHR35008:SF9">
    <property type="entry name" value="CYTOCHROME C DOMAIN-CONTAINING PROTEIN"/>
    <property type="match status" value="1"/>
</dbReference>
<dbReference type="Pfam" id="PF00034">
    <property type="entry name" value="Cytochrom_C"/>
    <property type="match status" value="1"/>
</dbReference>
<dbReference type="Pfam" id="PF21342">
    <property type="entry name" value="SoxA-TsdA_cyt-c"/>
    <property type="match status" value="1"/>
</dbReference>
<dbReference type="SUPFAM" id="SSF46626">
    <property type="entry name" value="Cytochrome c"/>
    <property type="match status" value="2"/>
</dbReference>
<dbReference type="PROSITE" id="PS51007">
    <property type="entry name" value="CYTC"/>
    <property type="match status" value="2"/>
</dbReference>
<name>TSDA_THIK1</name>
<accession>D5WYQ5</accession>
<organism>
    <name type="scientific">Thiomonas intermedia (strain K12)</name>
    <name type="common">Thiobacillus intermedius</name>
    <dbReference type="NCBI Taxonomy" id="75379"/>
    <lineage>
        <taxon>Bacteria</taxon>
        <taxon>Pseudomonadati</taxon>
        <taxon>Pseudomonadota</taxon>
        <taxon>Betaproteobacteria</taxon>
        <taxon>Burkholderiales</taxon>
        <taxon>Thiomonas</taxon>
    </lineage>
</organism>
<feature type="signal peptide" evidence="2">
    <location>
        <begin position="1"/>
        <end position="27"/>
    </location>
</feature>
<feature type="chain" id="PRO_5000590631" description="Thiosulfate dehydrogenase">
    <location>
        <begin position="28"/>
        <end position="314"/>
    </location>
</feature>
<feature type="domain" description="Cytochrome c 1" evidence="3">
    <location>
        <begin position="58"/>
        <end position="192"/>
    </location>
</feature>
<feature type="domain" description="Cytochrome c 2" evidence="3">
    <location>
        <begin position="185"/>
        <end position="270"/>
    </location>
</feature>
<feature type="binding site" description="covalent" evidence="3">
    <location>
        <position position="90"/>
    </location>
    <ligand>
        <name>heme c</name>
        <dbReference type="ChEBI" id="CHEBI:61717"/>
        <label>1</label>
    </ligand>
</feature>
<feature type="binding site" description="covalent" evidence="3">
    <location>
        <position position="93"/>
    </location>
    <ligand>
        <name>heme c</name>
        <dbReference type="ChEBI" id="CHEBI:61717"/>
        <label>1</label>
    </ligand>
</feature>
<feature type="binding site" description="axial binding residue" evidence="3">
    <location>
        <position position="94"/>
    </location>
    <ligand>
        <name>heme c</name>
        <dbReference type="ChEBI" id="CHEBI:61717"/>
        <label>1</label>
    </ligand>
    <ligandPart>
        <name>Fe</name>
        <dbReference type="ChEBI" id="CHEBI:18248"/>
    </ligandPart>
</feature>
<feature type="binding site" description="covalent" evidence="3">
    <location>
        <position position="198"/>
    </location>
    <ligand>
        <name>heme c</name>
        <dbReference type="ChEBI" id="CHEBI:61717"/>
        <label>2</label>
    </ligand>
</feature>
<feature type="binding site" description="covalent" evidence="3">
    <location>
        <position position="201"/>
    </location>
    <ligand>
        <name>heme c</name>
        <dbReference type="ChEBI" id="CHEBI:61717"/>
        <label>2</label>
    </ligand>
</feature>
<feature type="binding site" description="axial binding residue" evidence="3">
    <location>
        <position position="202"/>
    </location>
    <ligand>
        <name>heme c</name>
        <dbReference type="ChEBI" id="CHEBI:61717"/>
        <label>2</label>
    </ligand>
    <ligandPart>
        <name>Fe</name>
        <dbReference type="ChEBI" id="CHEBI:18248"/>
    </ligandPart>
</feature>
<reference key="1">
    <citation type="submission" date="2010-04" db="EMBL/GenBank/DDBJ databases">
        <title>Complete sequence of Thiomonas intermedia K12.</title>
        <authorList>
            <consortium name="US DOE Joint Genome Institute"/>
            <person name="Lucas S."/>
            <person name="Copeland A."/>
            <person name="Lapidus A."/>
            <person name="Cheng J.-F."/>
            <person name="Bruce D."/>
            <person name="Goodwin L."/>
            <person name="Pitluck S."/>
            <person name="Davenport K."/>
            <person name="Detter J.C."/>
            <person name="Han C."/>
            <person name="Tapia R."/>
            <person name="Land M."/>
            <person name="Hauser L."/>
            <person name="Kyrpides N."/>
            <person name="Ovchinnikova G."/>
            <person name="Kerfeld C.A."/>
            <person name="Cannon G.C."/>
            <person name="Heinhorst S."/>
            <person name="Woyke T."/>
        </authorList>
    </citation>
    <scope>NUCLEOTIDE SEQUENCE [LARGE SCALE GENOMIC DNA]</scope>
    <source>
        <strain>K12</strain>
    </source>
</reference>
<reference key="2">
    <citation type="journal article" date="2012" name="Environ. Microbiol.">
        <title>Thiosulfate dehydrogenase: a widespread unusual acidophilic c-type cytochrome.</title>
        <authorList>
            <person name="Denkmann K."/>
            <person name="Grein F."/>
            <person name="Zigann R."/>
            <person name="Siemen A."/>
            <person name="Bergmann J."/>
            <person name="van Helmont S."/>
            <person name="Nicolai A."/>
            <person name="Pereira I.A."/>
            <person name="Dahl C."/>
        </authorList>
    </citation>
    <scope>FUNCTION</scope>
    <scope>CATALYTIC ACTIVITY</scope>
    <scope>BIOPHYSICOCHEMICAL PROPERTIES</scope>
    <scope>SUBUNIT</scope>
</reference>
<proteinExistence type="evidence at protein level"/>
<evidence type="ECO:0000250" key="1"/>
<evidence type="ECO:0000255" key="2"/>
<evidence type="ECO:0000255" key="3">
    <source>
        <dbReference type="PROSITE-ProRule" id="PRU00433"/>
    </source>
</evidence>
<evidence type="ECO:0000269" key="4">
    <source>
    </source>
</evidence>
<evidence type="ECO:0000305" key="5">
    <source>
    </source>
</evidence>
<protein>
    <recommendedName>
        <fullName>Thiosulfate dehydrogenase</fullName>
        <ecNumber>1.8.2.2</ecNumber>
    </recommendedName>
    <alternativeName>
        <fullName>Tetrathionate synthase</fullName>
    </alternativeName>
</protein>
<comment type="function">
    <text evidence="4">Catalyzes the oxidation of 2 molecules of thiosulfate to tetrathionate, using TsdB as an electron acceptor.</text>
</comment>
<comment type="catalytic activity">
    <reaction evidence="4">
        <text>2 thiosulfate + 2 Fe(III)-[cytochrome c] = tetrathionate + 2 Fe(II)-[cytochrome c] + 2 H(+)</text>
        <dbReference type="Rhea" id="RHEA:20549"/>
        <dbReference type="Rhea" id="RHEA-COMP:10350"/>
        <dbReference type="Rhea" id="RHEA-COMP:14399"/>
        <dbReference type="ChEBI" id="CHEBI:15226"/>
        <dbReference type="ChEBI" id="CHEBI:15378"/>
        <dbReference type="ChEBI" id="CHEBI:29033"/>
        <dbReference type="ChEBI" id="CHEBI:29034"/>
        <dbReference type="ChEBI" id="CHEBI:33542"/>
        <dbReference type="EC" id="1.8.2.2"/>
    </reaction>
</comment>
<comment type="biophysicochemical properties">
    <kinetics>
        <Vmax evidence="4">121000.0 umol/min/mg enzyme (at pH 3.0)</Vmax>
    </kinetics>
</comment>
<comment type="subunit">
    <text evidence="5">Monomer.</text>
</comment>
<comment type="subcellular location">
    <subcellularLocation>
        <location evidence="1">Periplasm</location>
    </subcellularLocation>
</comment>
<comment type="PTM">
    <text evidence="4">Binds 2 heme c groups covalently per subunit.</text>
</comment>
<keyword id="KW-0349">Heme</keyword>
<keyword id="KW-0408">Iron</keyword>
<keyword id="KW-0479">Metal-binding</keyword>
<keyword id="KW-0560">Oxidoreductase</keyword>
<keyword id="KW-0574">Periplasm</keyword>
<keyword id="KW-0677">Repeat</keyword>
<keyword id="KW-0732">Signal</keyword>